<feature type="chain" id="PRO_0000451610" description="Ciliary microtubule inner protein 3">
    <location>
        <begin position="1"/>
        <end position="112"/>
    </location>
</feature>
<feature type="region of interest" description="Disordered" evidence="2">
    <location>
        <begin position="1"/>
        <end position="34"/>
    </location>
</feature>
<feature type="splice variant" id="VSP_062519" description="In isoform 2.">
    <original>MCK</original>
    <variation>MGRKEHESPSQPHMCGWE</variation>
    <location>
        <begin position="1"/>
        <end position="3"/>
    </location>
</feature>
<evidence type="ECO:0000250" key="1">
    <source>
        <dbReference type="UniProtKB" id="A0A3Q1LFG5"/>
    </source>
</evidence>
<evidence type="ECO:0000256" key="2">
    <source>
        <dbReference type="SAM" id="MobiDB-lite"/>
    </source>
</evidence>
<evidence type="ECO:0000305" key="3"/>
<evidence type="ECO:0000312" key="4">
    <source>
        <dbReference type="HGNC" id="HGNC:55126"/>
    </source>
</evidence>
<proteinExistence type="evidence at protein level"/>
<name>CMIP3_HUMAN</name>
<gene>
    <name evidence="4" type="primary">CIMIP3</name>
    <name type="synonym">GUCA1ANB</name>
</gene>
<organism>
    <name type="scientific">Homo sapiens</name>
    <name type="common">Human</name>
    <dbReference type="NCBI Taxonomy" id="9606"/>
    <lineage>
        <taxon>Eukaryota</taxon>
        <taxon>Metazoa</taxon>
        <taxon>Chordata</taxon>
        <taxon>Craniata</taxon>
        <taxon>Vertebrata</taxon>
        <taxon>Euteleostomi</taxon>
        <taxon>Mammalia</taxon>
        <taxon>Eutheria</taxon>
        <taxon>Euarchontoglires</taxon>
        <taxon>Primates</taxon>
        <taxon>Haplorrhini</taxon>
        <taxon>Catarrhini</taxon>
        <taxon>Hominidae</taxon>
        <taxon>Homo</taxon>
    </lineage>
</organism>
<protein>
    <recommendedName>
        <fullName evidence="4">Ciliary microtubule inner protein 3</fullName>
    </recommendedName>
    <alternativeName>
        <fullName evidence="4">GUCA1A neighbor</fullName>
    </alternativeName>
</protein>
<accession>X6R8D5</accession>
<accession>A0A096LNT9</accession>
<dbReference type="EMBL" id="AL096814">
    <property type="status" value="NOT_ANNOTATED_CDS"/>
    <property type="molecule type" value="Genomic_DNA"/>
</dbReference>
<dbReference type="CCDS" id="CCDS93922.1">
    <molecule id="X6R8D5-1"/>
</dbReference>
<dbReference type="RefSeq" id="NP_001357510.1">
    <molecule id="X6R8D5-2"/>
    <property type="nucleotide sequence ID" value="NM_001370581.1"/>
</dbReference>
<dbReference type="RefSeq" id="NP_001371923.1">
    <molecule id="X6R8D5-1"/>
    <property type="nucleotide sequence ID" value="NM_001384994.1"/>
</dbReference>
<dbReference type="BioMuta" id="ENSG00000214732"/>
<dbReference type="MassIVE" id="X6R8D5"/>
<dbReference type="PaxDb" id="9606-ENSP00000362054"/>
<dbReference type="PeptideAtlas" id="X6R8D5"/>
<dbReference type="Ensembl" id="ENST00000372963.4">
    <molecule id="X6R8D5-2"/>
    <property type="protein sequence ID" value="ENSP00000362054.3"/>
    <property type="gene ID" value="ENSG00000287363.4"/>
</dbReference>
<dbReference type="Ensembl" id="ENST00000623004.2">
    <molecule id="X6R8D5-1"/>
    <property type="protein sequence ID" value="ENSP00000485219.1"/>
    <property type="gene ID" value="ENSG00000287363.4"/>
</dbReference>
<dbReference type="GeneID" id="114841037"/>
<dbReference type="MANE-Select" id="ENST00000623004.2">
    <property type="protein sequence ID" value="ENSP00000485219.1"/>
    <property type="RefSeq nucleotide sequence ID" value="NM_001384994.1"/>
    <property type="RefSeq protein sequence ID" value="NP_001371923.1"/>
</dbReference>
<dbReference type="UCSC" id="uc063onq.1">
    <molecule id="X6R8D5-1"/>
    <property type="organism name" value="human"/>
</dbReference>
<dbReference type="AGR" id="HGNC:55126"/>
<dbReference type="GeneCards" id="CIMIP3"/>
<dbReference type="HGNC" id="HGNC:55126">
    <property type="gene designation" value="CIMIP3"/>
</dbReference>
<dbReference type="HPA" id="ENSG00000287363">
    <property type="expression patterns" value="Tissue enriched (testis)"/>
</dbReference>
<dbReference type="neXtProt" id="NX_X6R8D5"/>
<dbReference type="VEuPathDB" id="HostDB:ENSG00000214732"/>
<dbReference type="VEuPathDB" id="HostDB:ENSG00000287363"/>
<dbReference type="eggNOG" id="ENOG502SANR">
    <property type="taxonomic scope" value="Eukaryota"/>
</dbReference>
<dbReference type="GeneTree" id="ENSGT00390000014226"/>
<dbReference type="HOGENOM" id="CLU_2215776_0_0_1"/>
<dbReference type="InParanoid" id="X6R8D5"/>
<dbReference type="OMA" id="NVALWQS"/>
<dbReference type="PAN-GO" id="X6R8D5">
    <property type="GO annotations" value="0 GO annotations based on evolutionary models"/>
</dbReference>
<dbReference type="Proteomes" id="UP000005640">
    <property type="component" value="Chromosome 6"/>
</dbReference>
<dbReference type="RNAct" id="X6R8D5">
    <property type="molecule type" value="protein"/>
</dbReference>
<dbReference type="Bgee" id="ENSG00000287363">
    <property type="expression patterns" value="Expressed in left testis and 18 other cell types or tissues"/>
</dbReference>
<dbReference type="InterPro" id="IPR054446">
    <property type="entry name" value="CIMIP3-like"/>
</dbReference>
<dbReference type="PANTHER" id="PTHR35444">
    <property type="entry name" value="RIKEN CDNA 1700001C19 GENE"/>
    <property type="match status" value="1"/>
</dbReference>
<dbReference type="PANTHER" id="PTHR35444:SF1">
    <property type="entry name" value="RIKEN CDNA 1700001C19 GENE"/>
    <property type="match status" value="1"/>
</dbReference>
<dbReference type="Pfam" id="PF22581">
    <property type="entry name" value="CIMIP3"/>
    <property type="match status" value="1"/>
</dbReference>
<comment type="subcellular location">
    <subcellularLocation>
        <location evidence="1">Cytoplasm</location>
        <location evidence="1">Cytoskeleton</location>
        <location evidence="1">Flagellum axoneme</location>
    </subcellularLocation>
    <text evidence="1">Associated with axonemal doublet microtubules in the sperm flagellum.</text>
</comment>
<comment type="alternative products">
    <event type="alternative splicing"/>
    <isoform>
        <id>X6R8D5-1</id>
        <name>1</name>
        <sequence type="displayed"/>
    </isoform>
    <isoform>
        <id>X6R8D5-2</id>
        <name>2</name>
        <sequence type="described" ref="VSP_062519"/>
    </isoform>
</comment>
<comment type="similarity">
    <text evidence="3">Belongs to the CIMIP3-like family.</text>
</comment>
<sequence length="112" mass="12786">MCKDSQKPSVPSHGPKTPSCKGVKAPHSSRPRAWKQDLEQSLAAAYVPVVVDSKGQNPDKLRFNFYTSQYSNSLNPFYTLQKPTCGYLYRRDTDHTRKRFDVPPANLVLWRS</sequence>
<reference key="1">
    <citation type="journal article" date="2003" name="Nature">
        <title>The DNA sequence and analysis of human chromosome 6.</title>
        <authorList>
            <person name="Mungall A.J."/>
            <person name="Palmer S.A."/>
            <person name="Sims S.K."/>
            <person name="Edwards C.A."/>
            <person name="Ashurst J.L."/>
            <person name="Wilming L."/>
            <person name="Jones M.C."/>
            <person name="Horton R."/>
            <person name="Hunt S.E."/>
            <person name="Scott C.E."/>
            <person name="Gilbert J.G.R."/>
            <person name="Clamp M.E."/>
            <person name="Bethel G."/>
            <person name="Milne S."/>
            <person name="Ainscough R."/>
            <person name="Almeida J.P."/>
            <person name="Ambrose K.D."/>
            <person name="Andrews T.D."/>
            <person name="Ashwell R.I.S."/>
            <person name="Babbage A.K."/>
            <person name="Bagguley C.L."/>
            <person name="Bailey J."/>
            <person name="Banerjee R."/>
            <person name="Barker D.J."/>
            <person name="Barlow K.F."/>
            <person name="Bates K."/>
            <person name="Beare D.M."/>
            <person name="Beasley H."/>
            <person name="Beasley O."/>
            <person name="Bird C.P."/>
            <person name="Blakey S.E."/>
            <person name="Bray-Allen S."/>
            <person name="Brook J."/>
            <person name="Brown A.J."/>
            <person name="Brown J.Y."/>
            <person name="Burford D.C."/>
            <person name="Burrill W."/>
            <person name="Burton J."/>
            <person name="Carder C."/>
            <person name="Carter N.P."/>
            <person name="Chapman J.C."/>
            <person name="Clark S.Y."/>
            <person name="Clark G."/>
            <person name="Clee C.M."/>
            <person name="Clegg S."/>
            <person name="Cobley V."/>
            <person name="Collier R.E."/>
            <person name="Collins J.E."/>
            <person name="Colman L.K."/>
            <person name="Corby N.R."/>
            <person name="Coville G.J."/>
            <person name="Culley K.M."/>
            <person name="Dhami P."/>
            <person name="Davies J."/>
            <person name="Dunn M."/>
            <person name="Earthrowl M.E."/>
            <person name="Ellington A.E."/>
            <person name="Evans K.A."/>
            <person name="Faulkner L."/>
            <person name="Francis M.D."/>
            <person name="Frankish A."/>
            <person name="Frankland J."/>
            <person name="French L."/>
            <person name="Garner P."/>
            <person name="Garnett J."/>
            <person name="Ghori M.J."/>
            <person name="Gilby L.M."/>
            <person name="Gillson C.J."/>
            <person name="Glithero R.J."/>
            <person name="Grafham D.V."/>
            <person name="Grant M."/>
            <person name="Gribble S."/>
            <person name="Griffiths C."/>
            <person name="Griffiths M.N.D."/>
            <person name="Hall R."/>
            <person name="Halls K.S."/>
            <person name="Hammond S."/>
            <person name="Harley J.L."/>
            <person name="Hart E.A."/>
            <person name="Heath P.D."/>
            <person name="Heathcott R."/>
            <person name="Holmes S.J."/>
            <person name="Howden P.J."/>
            <person name="Howe K.L."/>
            <person name="Howell G.R."/>
            <person name="Huckle E."/>
            <person name="Humphray S.J."/>
            <person name="Humphries M.D."/>
            <person name="Hunt A.R."/>
            <person name="Johnson C.M."/>
            <person name="Joy A.A."/>
            <person name="Kay M."/>
            <person name="Keenan S.J."/>
            <person name="Kimberley A.M."/>
            <person name="King A."/>
            <person name="Laird G.K."/>
            <person name="Langford C."/>
            <person name="Lawlor S."/>
            <person name="Leongamornlert D.A."/>
            <person name="Leversha M."/>
            <person name="Lloyd C.R."/>
            <person name="Lloyd D.M."/>
            <person name="Loveland J.E."/>
            <person name="Lovell J."/>
            <person name="Martin S."/>
            <person name="Mashreghi-Mohammadi M."/>
            <person name="Maslen G.L."/>
            <person name="Matthews L."/>
            <person name="McCann O.T."/>
            <person name="McLaren S.J."/>
            <person name="McLay K."/>
            <person name="McMurray A."/>
            <person name="Moore M.J.F."/>
            <person name="Mullikin J.C."/>
            <person name="Niblett D."/>
            <person name="Nickerson T."/>
            <person name="Novik K.L."/>
            <person name="Oliver K."/>
            <person name="Overton-Larty E.K."/>
            <person name="Parker A."/>
            <person name="Patel R."/>
            <person name="Pearce A.V."/>
            <person name="Peck A.I."/>
            <person name="Phillimore B.J.C.T."/>
            <person name="Phillips S."/>
            <person name="Plumb R.W."/>
            <person name="Porter K.M."/>
            <person name="Ramsey Y."/>
            <person name="Ranby S.A."/>
            <person name="Rice C.M."/>
            <person name="Ross M.T."/>
            <person name="Searle S.M."/>
            <person name="Sehra H.K."/>
            <person name="Sheridan E."/>
            <person name="Skuce C.D."/>
            <person name="Smith S."/>
            <person name="Smith M."/>
            <person name="Spraggon L."/>
            <person name="Squares S.L."/>
            <person name="Steward C.A."/>
            <person name="Sycamore N."/>
            <person name="Tamlyn-Hall G."/>
            <person name="Tester J."/>
            <person name="Theaker A.J."/>
            <person name="Thomas D.W."/>
            <person name="Thorpe A."/>
            <person name="Tracey A."/>
            <person name="Tromans A."/>
            <person name="Tubby B."/>
            <person name="Wall M."/>
            <person name="Wallis J.M."/>
            <person name="West A.P."/>
            <person name="White S.S."/>
            <person name="Whitehead S.L."/>
            <person name="Whittaker H."/>
            <person name="Wild A."/>
            <person name="Willey D.J."/>
            <person name="Wilmer T.E."/>
            <person name="Wood J.M."/>
            <person name="Wray P.W."/>
            <person name="Wyatt J.C."/>
            <person name="Young L."/>
            <person name="Younger R.M."/>
            <person name="Bentley D.R."/>
            <person name="Coulson A."/>
            <person name="Durbin R.M."/>
            <person name="Hubbard T."/>
            <person name="Sulston J.E."/>
            <person name="Dunham I."/>
            <person name="Rogers J."/>
            <person name="Beck S."/>
        </authorList>
    </citation>
    <scope>NUCLEOTIDE SEQUENCE [LARGE SCALE GENOMIC DNA]</scope>
</reference>
<keyword id="KW-0025">Alternative splicing</keyword>
<keyword id="KW-0966">Cell projection</keyword>
<keyword id="KW-0969">Cilium</keyword>
<keyword id="KW-0963">Cytoplasm</keyword>
<keyword id="KW-0206">Cytoskeleton</keyword>
<keyword id="KW-0282">Flagellum</keyword>
<keyword id="KW-1267">Proteomics identification</keyword>
<keyword id="KW-1185">Reference proteome</keyword>